<comment type="similarity">
    <text evidence="1">Belongs to the UPF0741 family.</text>
</comment>
<sequence length="113" mass="13536">MKNTFLICDECQAVNIRTLQKKLEKLDPDAEIVIGCQSYCGPGRRKTFTFVNNRPLAALTEEELIEKVSQQLKKPRDPEEEERLRKRHEERKRRKEEQDRKLKEKLEKRKAQQ</sequence>
<evidence type="ECO:0000255" key="1">
    <source>
        <dbReference type="HAMAP-Rule" id="MF_01863"/>
    </source>
</evidence>
<evidence type="ECO:0000256" key="2">
    <source>
        <dbReference type="SAM" id="MobiDB-lite"/>
    </source>
</evidence>
<feature type="chain" id="PRO_0000372753" description="UPF0741 protein MW0548">
    <location>
        <begin position="1"/>
        <end position="113"/>
    </location>
</feature>
<feature type="region of interest" description="Disordered" evidence="2">
    <location>
        <begin position="68"/>
        <end position="113"/>
    </location>
</feature>
<feature type="coiled-coil region" evidence="1">
    <location>
        <begin position="78"/>
        <end position="113"/>
    </location>
</feature>
<feature type="compositionally biased region" description="Basic residues" evidence="2">
    <location>
        <begin position="85"/>
        <end position="94"/>
    </location>
</feature>
<feature type="compositionally biased region" description="Basic and acidic residues" evidence="2">
    <location>
        <begin position="95"/>
        <end position="113"/>
    </location>
</feature>
<proteinExistence type="inferred from homology"/>
<organism>
    <name type="scientific">Staphylococcus aureus (strain MW2)</name>
    <dbReference type="NCBI Taxonomy" id="196620"/>
    <lineage>
        <taxon>Bacteria</taxon>
        <taxon>Bacillati</taxon>
        <taxon>Bacillota</taxon>
        <taxon>Bacilli</taxon>
        <taxon>Bacillales</taxon>
        <taxon>Staphylococcaceae</taxon>
        <taxon>Staphylococcus</taxon>
    </lineage>
</organism>
<keyword id="KW-0175">Coiled coil</keyword>
<reference key="1">
    <citation type="journal article" date="2002" name="Lancet">
        <title>Genome and virulence determinants of high virulence community-acquired MRSA.</title>
        <authorList>
            <person name="Baba T."/>
            <person name="Takeuchi F."/>
            <person name="Kuroda M."/>
            <person name="Yuzawa H."/>
            <person name="Aoki K."/>
            <person name="Oguchi A."/>
            <person name="Nagai Y."/>
            <person name="Iwama N."/>
            <person name="Asano K."/>
            <person name="Naimi T."/>
            <person name="Kuroda H."/>
            <person name="Cui L."/>
            <person name="Yamamoto K."/>
            <person name="Hiramatsu K."/>
        </authorList>
    </citation>
    <scope>NUCLEOTIDE SEQUENCE [LARGE SCALE GENOMIC DNA]</scope>
    <source>
        <strain>MW2</strain>
    </source>
</reference>
<gene>
    <name type="ordered locus">MW0548</name>
</gene>
<name>Y548_STAAW</name>
<dbReference type="EMBL" id="BA000033">
    <property type="protein sequence ID" value="BAB94413.1"/>
    <property type="molecule type" value="Genomic_DNA"/>
</dbReference>
<dbReference type="RefSeq" id="WP_000798967.1">
    <property type="nucleotide sequence ID" value="NC_003923.1"/>
</dbReference>
<dbReference type="SMR" id="Q7A1P1"/>
<dbReference type="KEGG" id="sam:MW0548"/>
<dbReference type="HOGENOM" id="CLU_2156795_0_0_9"/>
<dbReference type="HAMAP" id="MF_01863">
    <property type="entry name" value="UPF0741"/>
    <property type="match status" value="1"/>
</dbReference>
<dbReference type="InterPro" id="IPR009910">
    <property type="entry name" value="DUF1450"/>
</dbReference>
<dbReference type="InterPro" id="IPR020880">
    <property type="entry name" value="UPF0741"/>
</dbReference>
<dbReference type="Pfam" id="PF07293">
    <property type="entry name" value="DUF1450"/>
    <property type="match status" value="1"/>
</dbReference>
<accession>Q7A1P1</accession>
<protein>
    <recommendedName>
        <fullName evidence="1">UPF0741 protein MW0548</fullName>
    </recommendedName>
</protein>